<organism>
    <name type="scientific">Thermotoga maritima (strain ATCC 43589 / DSM 3109 / JCM 10099 / NBRC 100826 / MSB8)</name>
    <dbReference type="NCBI Taxonomy" id="243274"/>
    <lineage>
        <taxon>Bacteria</taxon>
        <taxon>Thermotogati</taxon>
        <taxon>Thermotogota</taxon>
        <taxon>Thermotogae</taxon>
        <taxon>Thermotogales</taxon>
        <taxon>Thermotogaceae</taxon>
        <taxon>Thermotoga</taxon>
    </lineage>
</organism>
<proteinExistence type="inferred from homology"/>
<comment type="function">
    <text evidence="1">Modulates transcription in response to changes in cellular NADH/NAD(+) redox state.</text>
</comment>
<comment type="subunit">
    <text evidence="1">Homodimer.</text>
</comment>
<comment type="subcellular location">
    <subcellularLocation>
        <location evidence="1">Cytoplasm</location>
    </subcellularLocation>
</comment>
<comment type="similarity">
    <text evidence="3">Belongs to the transcriptional regulatory Rex family.</text>
</comment>
<comment type="caution">
    <text evidence="3">This protein lacks the conserved Gly residues in positions 90 and 93 that are potentially involved in NAD(H) binding. They are replaced by an Asn and an Ala, respectively.</text>
</comment>
<gene>
    <name type="primary">rex2</name>
    <name type="ordered locus">TM_1427</name>
</gene>
<evidence type="ECO:0000250" key="1"/>
<evidence type="ECO:0000255" key="2"/>
<evidence type="ECO:0000305" key="3"/>
<feature type="chain" id="PRO_0000097927" description="Redox-sensing transcriptional repressor Rex 2">
    <location>
        <begin position="1"/>
        <end position="204"/>
    </location>
</feature>
<feature type="DNA-binding region" description="H-T-H motif" evidence="2">
    <location>
        <begin position="17"/>
        <end position="53"/>
    </location>
</feature>
<accession>Q9X1E1</accession>
<keyword id="KW-0963">Cytoplasm</keyword>
<keyword id="KW-0238">DNA-binding</keyword>
<keyword id="KW-1185">Reference proteome</keyword>
<keyword id="KW-0678">Repressor</keyword>
<keyword id="KW-0804">Transcription</keyword>
<keyword id="KW-0805">Transcription regulation</keyword>
<protein>
    <recommendedName>
        <fullName>Redox-sensing transcriptional repressor Rex 2</fullName>
    </recommendedName>
</protein>
<dbReference type="EMBL" id="AE000512">
    <property type="protein sequence ID" value="AAD36497.1"/>
    <property type="molecule type" value="Genomic_DNA"/>
</dbReference>
<dbReference type="PIR" id="H72256">
    <property type="entry name" value="H72256"/>
</dbReference>
<dbReference type="RefSeq" id="NP_229227.1">
    <property type="nucleotide sequence ID" value="NC_000853.1"/>
</dbReference>
<dbReference type="RefSeq" id="WP_004081679.1">
    <property type="nucleotide sequence ID" value="NZ_CP011107.1"/>
</dbReference>
<dbReference type="SMR" id="Q9X1E1"/>
<dbReference type="STRING" id="243274.TM_1427"/>
<dbReference type="PaxDb" id="243274-THEMA_07180"/>
<dbReference type="EnsemblBacteria" id="AAD36497">
    <property type="protein sequence ID" value="AAD36497"/>
    <property type="gene ID" value="TM_1427"/>
</dbReference>
<dbReference type="KEGG" id="tma:TM1427"/>
<dbReference type="KEGG" id="tmi:THEMA_07180"/>
<dbReference type="KEGG" id="tmm:Tmari_1433"/>
<dbReference type="KEGG" id="tmw:THMA_1457"/>
<dbReference type="eggNOG" id="COG2344">
    <property type="taxonomic scope" value="Bacteria"/>
</dbReference>
<dbReference type="InParanoid" id="Q9X1E1"/>
<dbReference type="OrthoDB" id="9784760at2"/>
<dbReference type="Proteomes" id="UP000008183">
    <property type="component" value="Chromosome"/>
</dbReference>
<dbReference type="GO" id="GO:0005737">
    <property type="term" value="C:cytoplasm"/>
    <property type="evidence" value="ECO:0007669"/>
    <property type="project" value="UniProtKB-SubCell"/>
</dbReference>
<dbReference type="GO" id="GO:0003677">
    <property type="term" value="F:DNA binding"/>
    <property type="evidence" value="ECO:0007669"/>
    <property type="project" value="UniProtKB-UniRule"/>
</dbReference>
<dbReference type="GO" id="GO:0003700">
    <property type="term" value="F:DNA-binding transcription factor activity"/>
    <property type="evidence" value="ECO:0007669"/>
    <property type="project" value="UniProtKB-UniRule"/>
</dbReference>
<dbReference type="GO" id="GO:0045892">
    <property type="term" value="P:negative regulation of DNA-templated transcription"/>
    <property type="evidence" value="ECO:0007669"/>
    <property type="project" value="InterPro"/>
</dbReference>
<dbReference type="GO" id="GO:0051775">
    <property type="term" value="P:response to redox state"/>
    <property type="evidence" value="ECO:0007669"/>
    <property type="project" value="InterPro"/>
</dbReference>
<dbReference type="Gene3D" id="3.40.50.720">
    <property type="entry name" value="NAD(P)-binding Rossmann-like Domain"/>
    <property type="match status" value="1"/>
</dbReference>
<dbReference type="Gene3D" id="1.10.10.10">
    <property type="entry name" value="Winged helix-like DNA-binding domain superfamily/Winged helix DNA-binding domain"/>
    <property type="match status" value="1"/>
</dbReference>
<dbReference type="HAMAP" id="MF_01131">
    <property type="entry name" value="Rex"/>
    <property type="match status" value="1"/>
</dbReference>
<dbReference type="InterPro" id="IPR003781">
    <property type="entry name" value="CoA-bd"/>
</dbReference>
<dbReference type="InterPro" id="IPR036291">
    <property type="entry name" value="NAD(P)-bd_dom_sf"/>
</dbReference>
<dbReference type="InterPro" id="IPR009718">
    <property type="entry name" value="Rex_DNA-bd_C_dom"/>
</dbReference>
<dbReference type="InterPro" id="IPR022876">
    <property type="entry name" value="Tscrpt_rep_Rex"/>
</dbReference>
<dbReference type="InterPro" id="IPR036388">
    <property type="entry name" value="WH-like_DNA-bd_sf"/>
</dbReference>
<dbReference type="InterPro" id="IPR036390">
    <property type="entry name" value="WH_DNA-bd_sf"/>
</dbReference>
<dbReference type="NCBIfam" id="NF003994">
    <property type="entry name" value="PRK05472.2-3"/>
    <property type="match status" value="1"/>
</dbReference>
<dbReference type="NCBIfam" id="NF003995">
    <property type="entry name" value="PRK05472.2-4"/>
    <property type="match status" value="1"/>
</dbReference>
<dbReference type="NCBIfam" id="NF003996">
    <property type="entry name" value="PRK05472.2-5"/>
    <property type="match status" value="1"/>
</dbReference>
<dbReference type="PANTHER" id="PTHR35786">
    <property type="entry name" value="REDOX-SENSING TRANSCRIPTIONAL REPRESSOR REX"/>
    <property type="match status" value="1"/>
</dbReference>
<dbReference type="PANTHER" id="PTHR35786:SF1">
    <property type="entry name" value="REDOX-SENSING TRANSCRIPTIONAL REPRESSOR REX 1"/>
    <property type="match status" value="1"/>
</dbReference>
<dbReference type="Pfam" id="PF02629">
    <property type="entry name" value="CoA_binding"/>
    <property type="match status" value="1"/>
</dbReference>
<dbReference type="Pfam" id="PF06971">
    <property type="entry name" value="Put_DNA-bind_N"/>
    <property type="match status" value="1"/>
</dbReference>
<dbReference type="SMART" id="SM00881">
    <property type="entry name" value="CoA_binding"/>
    <property type="match status" value="1"/>
</dbReference>
<dbReference type="SUPFAM" id="SSF51735">
    <property type="entry name" value="NAD(P)-binding Rossmann-fold domains"/>
    <property type="match status" value="1"/>
</dbReference>
<dbReference type="SUPFAM" id="SSF46785">
    <property type="entry name" value="Winged helix' DNA-binding domain"/>
    <property type="match status" value="1"/>
</dbReference>
<reference key="1">
    <citation type="journal article" date="1999" name="Nature">
        <title>Evidence for lateral gene transfer between Archaea and Bacteria from genome sequence of Thermotoga maritima.</title>
        <authorList>
            <person name="Nelson K.E."/>
            <person name="Clayton R.A."/>
            <person name="Gill S.R."/>
            <person name="Gwinn M.L."/>
            <person name="Dodson R.J."/>
            <person name="Haft D.H."/>
            <person name="Hickey E.K."/>
            <person name="Peterson J.D."/>
            <person name="Nelson W.C."/>
            <person name="Ketchum K.A."/>
            <person name="McDonald L.A."/>
            <person name="Utterback T.R."/>
            <person name="Malek J.A."/>
            <person name="Linher K.D."/>
            <person name="Garrett M.M."/>
            <person name="Stewart A.M."/>
            <person name="Cotton M.D."/>
            <person name="Pratt M.S."/>
            <person name="Phillips C.A."/>
            <person name="Richardson D.L."/>
            <person name="Heidelberg J.F."/>
            <person name="Sutton G.G."/>
            <person name="Fleischmann R.D."/>
            <person name="Eisen J.A."/>
            <person name="White O."/>
            <person name="Salzberg S.L."/>
            <person name="Smith H.O."/>
            <person name="Venter J.C."/>
            <person name="Fraser C.M."/>
        </authorList>
    </citation>
    <scope>NUCLEOTIDE SEQUENCE [LARGE SCALE GENOMIC DNA]</scope>
    <source>
        <strain>ATCC 43589 / DSM 3109 / JCM 10099 / NBRC 100826 / MSB8</strain>
    </source>
</reference>
<sequence>MAEMIHLPRSTFERLKMYRKVLEATKKPYISSDEIARFLEINPDLVRKDFSYLNCQGKPRVGYDVEELRKELDDLFGVNNTTNMIIVGANDLARALLSLDFSKAGVKVVAVFDTERENVGKFIGEFAVRELDVLERVIRRFDAEIAALCVSKDRAQATAEFLIEKGIKAVWNFTGVHLDLPEGVIVVEEDLTQSLLTIKHLLKK</sequence>
<name>REX2_THEMA</name>